<accession>P52841</accession>
<organism>
    <name type="scientific">Cavia porcellus</name>
    <name type="common">Guinea pig</name>
    <dbReference type="NCBI Taxonomy" id="10141"/>
    <lineage>
        <taxon>Eukaryota</taxon>
        <taxon>Metazoa</taxon>
        <taxon>Chordata</taxon>
        <taxon>Craniata</taxon>
        <taxon>Vertebrata</taxon>
        <taxon>Euteleostomi</taxon>
        <taxon>Mammalia</taxon>
        <taxon>Eutheria</taxon>
        <taxon>Euarchontoglires</taxon>
        <taxon>Glires</taxon>
        <taxon>Rodentia</taxon>
        <taxon>Hystricomorpha</taxon>
        <taxon>Caviidae</taxon>
        <taxon>Cavia</taxon>
    </lineage>
</organism>
<dbReference type="EC" id="2.8.2.2"/>
<dbReference type="EMBL" id="U55944">
    <property type="protein sequence ID" value="AAB07868.1"/>
    <property type="molecule type" value="mRNA"/>
</dbReference>
<dbReference type="EMBL" id="U35115">
    <property type="protein sequence ID" value="AAC52347.1"/>
    <property type="molecule type" value="mRNA"/>
</dbReference>
<dbReference type="PIR" id="JC4531">
    <property type="entry name" value="JC4531"/>
</dbReference>
<dbReference type="RefSeq" id="NP_001166297.1">
    <property type="nucleotide sequence ID" value="NM_001172826.1"/>
</dbReference>
<dbReference type="SMR" id="P52841"/>
<dbReference type="FunCoup" id="P52841">
    <property type="interactions" value="324"/>
</dbReference>
<dbReference type="GeneID" id="100379531"/>
<dbReference type="KEGG" id="cpoc:100379531"/>
<dbReference type="CTD" id="100379531"/>
<dbReference type="InParanoid" id="P52841"/>
<dbReference type="OrthoDB" id="205623at2759"/>
<dbReference type="Proteomes" id="UP000005447">
    <property type="component" value="Unassembled WGS sequence"/>
</dbReference>
<dbReference type="GO" id="GO:0005737">
    <property type="term" value="C:cytoplasm"/>
    <property type="evidence" value="ECO:0007669"/>
    <property type="project" value="UniProtKB-SubCell"/>
</dbReference>
<dbReference type="GO" id="GO:0004027">
    <property type="term" value="F:alcohol sulfotransferase activity"/>
    <property type="evidence" value="ECO:0007669"/>
    <property type="project" value="UniProtKB-EC"/>
</dbReference>
<dbReference type="GO" id="GO:0008202">
    <property type="term" value="P:steroid metabolic process"/>
    <property type="evidence" value="ECO:0007669"/>
    <property type="project" value="UniProtKB-KW"/>
</dbReference>
<dbReference type="FunFam" id="3.40.50.300:FF:000433">
    <property type="entry name" value="Estrogen sulfotransferase"/>
    <property type="match status" value="1"/>
</dbReference>
<dbReference type="Gene3D" id="3.40.50.300">
    <property type="entry name" value="P-loop containing nucleotide triphosphate hydrolases"/>
    <property type="match status" value="1"/>
</dbReference>
<dbReference type="InterPro" id="IPR027417">
    <property type="entry name" value="P-loop_NTPase"/>
</dbReference>
<dbReference type="InterPro" id="IPR000863">
    <property type="entry name" value="Sulfotransferase_dom"/>
</dbReference>
<dbReference type="PANTHER" id="PTHR11783">
    <property type="entry name" value="SULFOTRANSFERASE SULT"/>
    <property type="match status" value="1"/>
</dbReference>
<dbReference type="Pfam" id="PF00685">
    <property type="entry name" value="Sulfotransfer_1"/>
    <property type="match status" value="1"/>
</dbReference>
<dbReference type="SUPFAM" id="SSF52540">
    <property type="entry name" value="P-loop containing nucleoside triphosphate hydrolases"/>
    <property type="match status" value="1"/>
</dbReference>
<name>SUHB_CAVPO</name>
<proteinExistence type="evidence at protein level"/>
<comment type="function">
    <text>Sulfotransferase that utilizes 3'-phospho-5'-adenylyl sulfate (PAPS) as sulfonate donor to catalyze the sulfonation of 3-beta-hydroxyl groups of neutral steroids. High preference for C21 steroid (pregnenolone).</text>
</comment>
<comment type="catalytic activity">
    <reaction>
        <text>an alcohol + 3'-phosphoadenylyl sulfate = an alkyl sulfate + adenosine 3',5'-bisphosphate + H(+)</text>
        <dbReference type="Rhea" id="RHEA:22552"/>
        <dbReference type="ChEBI" id="CHEBI:15378"/>
        <dbReference type="ChEBI" id="CHEBI:30879"/>
        <dbReference type="ChEBI" id="CHEBI:58339"/>
        <dbReference type="ChEBI" id="CHEBI:58343"/>
        <dbReference type="ChEBI" id="CHEBI:83414"/>
        <dbReference type="EC" id="2.8.2.2"/>
    </reaction>
</comment>
<comment type="subunit">
    <text evidence="1">Homodimer.</text>
</comment>
<comment type="subcellular location">
    <subcellularLocation>
        <location>Cytoplasm</location>
    </subcellularLocation>
</comment>
<comment type="tissue specificity">
    <text>Liver, intestine and kidney.</text>
</comment>
<comment type="similarity">
    <text evidence="2">Belongs to the sulfotransferase 1 family.</text>
</comment>
<evidence type="ECO:0000250" key="1"/>
<evidence type="ECO:0000305" key="2"/>
<protein>
    <recommendedName>
        <fullName>3-beta-hydroxysteroid sulfotransferase</fullName>
        <ecNumber>2.8.2.2</ecNumber>
    </recommendedName>
    <alternativeName>
        <fullName>Alcohol sulfotransferase</fullName>
    </alternativeName>
    <alternativeName>
        <fullName>Hydroxysteroid sulfotransferase 2</fullName>
        <shortName>HST2</shortName>
    </alternativeName>
    <alternativeName>
        <fullName>Pregnenolone sulfotransferase</fullName>
    </alternativeName>
</protein>
<gene>
    <name type="primary">STD2</name>
</gene>
<keyword id="KW-0963">Cytoplasm</keyword>
<keyword id="KW-0903">Direct protein sequencing</keyword>
<keyword id="KW-0443">Lipid metabolism</keyword>
<keyword id="KW-1185">Reference proteome</keyword>
<keyword id="KW-0753">Steroid metabolism</keyword>
<keyword id="KW-0808">Transferase</keyword>
<sequence>MSDNTLWFEGIRFPMVGFSPELLREVRDKFLVKDEDTITVTYPKSGTNWLIEIVCLILSKGDPKWVQSVPIWDRSPWIETQHGNELMKSQKDPRIYTSHLPLHLFPKSFFSSKAKVIYCIRNPRDVLVSGYYFTSKMKIAEKPETLQQYMKWFLQGNVIYGSWFEHVRDWLSMREKENFLVLSYEELIKDTRSIVEKICQFLGKRLKPEEIDLVLKYSSFKFMKENEMSNYSLLPNDLTTEGFTFLRKGVVGDWKHHFTVAQAEEFDKIYQEKMAGYPPKLFPWEEC</sequence>
<feature type="chain" id="PRO_0000085140" description="3-beta-hydroxysteroid sulfotransferase">
    <location>
        <begin position="1"/>
        <end position="287"/>
    </location>
</feature>
<feature type="active site" description="Proton acceptor" evidence="1">
    <location>
        <position position="99"/>
    </location>
</feature>
<feature type="binding site" evidence="1">
    <location>
        <begin position="44"/>
        <end position="49"/>
    </location>
    <ligand>
        <name>3'-phosphoadenylyl sulfate</name>
        <dbReference type="ChEBI" id="CHEBI:58339"/>
    </ligand>
</feature>
<feature type="binding site" evidence="1">
    <location>
        <position position="72"/>
    </location>
    <ligand>
        <name>substrate</name>
    </ligand>
</feature>
<feature type="binding site" evidence="1">
    <location>
        <position position="77"/>
    </location>
    <ligand>
        <name>substrate</name>
    </ligand>
</feature>
<feature type="binding site" evidence="1">
    <location>
        <position position="121"/>
    </location>
    <ligand>
        <name>3'-phosphoadenylyl sulfate</name>
        <dbReference type="ChEBI" id="CHEBI:58339"/>
    </ligand>
</feature>
<feature type="binding site" evidence="1">
    <location>
        <position position="129"/>
    </location>
    <ligand>
        <name>3'-phosphoadenylyl sulfate</name>
        <dbReference type="ChEBI" id="CHEBI:58339"/>
    </ligand>
</feature>
<feature type="binding site" evidence="1">
    <location>
        <position position="184"/>
    </location>
    <ligand>
        <name>3'-phosphoadenylyl sulfate</name>
        <dbReference type="ChEBI" id="CHEBI:58339"/>
    </ligand>
</feature>
<feature type="binding site" evidence="1">
    <location>
        <begin position="218"/>
        <end position="223"/>
    </location>
    <ligand>
        <name>3'-phosphoadenylyl sulfate</name>
        <dbReference type="ChEBI" id="CHEBI:58339"/>
    </ligand>
</feature>
<feature type="binding site" evidence="1">
    <location>
        <begin position="247"/>
        <end position="249"/>
    </location>
    <ligand>
        <name>3'-phosphoadenylyl sulfate</name>
        <dbReference type="ChEBI" id="CHEBI:58339"/>
    </ligand>
</feature>
<feature type="sequence conflict" description="In Ref. 2; AAC52347." evidence="2" ref="2">
    <original>R</original>
    <variation>K</variation>
    <location>
        <position position="205"/>
    </location>
</feature>
<reference key="1">
    <citation type="journal article" date="1996" name="DNA Cell Biol.">
        <title>Isolation and characterization of a stereospecific 3beta-hydroxysteriod sulfotransferase (pregnenolone sulfotransferase) cDNA.</title>
        <authorList>
            <person name="Dufort I."/>
            <person name="Tremblay Y."/>
            <person name="Belanger A."/>
            <person name="Labrie F."/>
            <person name="Luu-The V."/>
        </authorList>
    </citation>
    <scope>NUCLEOTIDE SEQUENCE [MRNA]</scope>
    <source>
        <tissue>Adrenal gland</tissue>
    </source>
</reference>
<reference key="2">
    <citation type="journal article" date="1995" name="Biochem. Biophys. Res. Commun.">
        <title>Molecular cloning and expression of a guinea pig 3-hydroxysteroid sulfotransferase distinct from chiral-specific 3 alpha-hydroxysteroid sulfotransferase.</title>
        <authorList>
            <person name="Luu N.X."/>
            <person name="Driscoll W.J."/>
            <person name="Martin B.M."/>
            <person name="Strott C.A."/>
        </authorList>
    </citation>
    <scope>NUCLEOTIDE SEQUENCE [MRNA]</scope>
    <scope>PARTIAL PROTEIN SEQUENCE</scope>
    <source>
        <strain>NIH 2</strain>
        <tissue>Adrenal gland</tissue>
    </source>
</reference>